<comment type="function">
    <text evidence="2">Involved in mRNA degradation. Hydrolyzes single-stranded polyribonucleotides processively in the 3' to 5' direction.</text>
</comment>
<comment type="catalytic activity">
    <reaction evidence="2">
        <text>Exonucleolytic cleavage in the 3'- to 5'-direction to yield nucleoside 5'-phosphates.</text>
        <dbReference type="EC" id="3.1.13.1"/>
    </reaction>
</comment>
<comment type="subcellular location">
    <subcellularLocation>
        <location evidence="2">Cytoplasm</location>
    </subcellularLocation>
</comment>
<comment type="similarity">
    <text evidence="2">Belongs to the RNR ribonuclease family. RNase II subfamily.</text>
</comment>
<protein>
    <recommendedName>
        <fullName evidence="2">Exoribonuclease 2</fullName>
        <ecNumber evidence="2">3.1.13.1</ecNumber>
    </recommendedName>
    <alternativeName>
        <fullName evidence="2">Exoribonuclease II</fullName>
        <shortName evidence="2">RNase II</shortName>
        <shortName evidence="2">Ribonuclease II</shortName>
    </alternativeName>
</protein>
<organism>
    <name type="scientific">Vibrio cholerae serotype O1 (strain ATCC 39541 / Classical Ogawa 395 / O395)</name>
    <dbReference type="NCBI Taxonomy" id="345073"/>
    <lineage>
        <taxon>Bacteria</taxon>
        <taxon>Pseudomonadati</taxon>
        <taxon>Pseudomonadota</taxon>
        <taxon>Gammaproteobacteria</taxon>
        <taxon>Vibrionales</taxon>
        <taxon>Vibrionaceae</taxon>
        <taxon>Vibrio</taxon>
    </lineage>
</organism>
<proteinExistence type="inferred from homology"/>
<evidence type="ECO:0000255" key="1"/>
<evidence type="ECO:0000255" key="2">
    <source>
        <dbReference type="HAMAP-Rule" id="MF_01036"/>
    </source>
</evidence>
<evidence type="ECO:0000256" key="3">
    <source>
        <dbReference type="SAM" id="MobiDB-lite"/>
    </source>
</evidence>
<keyword id="KW-0963">Cytoplasm</keyword>
<keyword id="KW-0269">Exonuclease</keyword>
<keyword id="KW-0378">Hydrolase</keyword>
<keyword id="KW-0540">Nuclease</keyword>
<keyword id="KW-0694">RNA-binding</keyword>
<feature type="chain" id="PRO_1000072975" description="Exoribonuclease 2">
    <location>
        <begin position="1"/>
        <end position="678"/>
    </location>
</feature>
<feature type="domain" description="RNB" evidence="1">
    <location>
        <begin position="193"/>
        <end position="521"/>
    </location>
</feature>
<feature type="domain" description="S1 motif" evidence="2">
    <location>
        <begin position="568"/>
        <end position="650"/>
    </location>
</feature>
<feature type="region of interest" description="Disordered" evidence="3">
    <location>
        <begin position="658"/>
        <end position="678"/>
    </location>
</feature>
<dbReference type="EC" id="3.1.13.1" evidence="2"/>
<dbReference type="EMBL" id="CP000626">
    <property type="protein sequence ID" value="ABQ18712.1"/>
    <property type="molecule type" value="Genomic_DNA"/>
</dbReference>
<dbReference type="EMBL" id="CP001236">
    <property type="protein sequence ID" value="ACP11662.1"/>
    <property type="molecule type" value="Genomic_DNA"/>
</dbReference>
<dbReference type="RefSeq" id="WP_000485063.1">
    <property type="nucleotide sequence ID" value="NZ_JAACZH010000012.1"/>
</dbReference>
<dbReference type="SMR" id="A5F0G1"/>
<dbReference type="KEGG" id="vco:VC0395_0429"/>
<dbReference type="KEGG" id="vcr:VC395_A0829"/>
<dbReference type="PATRIC" id="fig|345073.21.peg.3561"/>
<dbReference type="eggNOG" id="COG4776">
    <property type="taxonomic scope" value="Bacteria"/>
</dbReference>
<dbReference type="HOGENOM" id="CLU_002333_7_3_6"/>
<dbReference type="OrthoDB" id="9764149at2"/>
<dbReference type="Proteomes" id="UP000000249">
    <property type="component" value="Chromosome 1"/>
</dbReference>
<dbReference type="GO" id="GO:0005829">
    <property type="term" value="C:cytosol"/>
    <property type="evidence" value="ECO:0007669"/>
    <property type="project" value="TreeGrafter"/>
</dbReference>
<dbReference type="GO" id="GO:0008859">
    <property type="term" value="F:exoribonuclease II activity"/>
    <property type="evidence" value="ECO:0007669"/>
    <property type="project" value="UniProtKB-UniRule"/>
</dbReference>
<dbReference type="GO" id="GO:0003723">
    <property type="term" value="F:RNA binding"/>
    <property type="evidence" value="ECO:0007669"/>
    <property type="project" value="UniProtKB-KW"/>
</dbReference>
<dbReference type="GO" id="GO:0006402">
    <property type="term" value="P:mRNA catabolic process"/>
    <property type="evidence" value="ECO:0007669"/>
    <property type="project" value="UniProtKB-UniRule"/>
</dbReference>
<dbReference type="Gene3D" id="2.40.50.640">
    <property type="match status" value="1"/>
</dbReference>
<dbReference type="Gene3D" id="2.40.50.140">
    <property type="entry name" value="Nucleic acid-binding proteins"/>
    <property type="match status" value="2"/>
</dbReference>
<dbReference type="HAMAP" id="MF_01036">
    <property type="entry name" value="RNase_II"/>
    <property type="match status" value="1"/>
</dbReference>
<dbReference type="InterPro" id="IPR011129">
    <property type="entry name" value="CSD"/>
</dbReference>
<dbReference type="InterPro" id="IPR012340">
    <property type="entry name" value="NA-bd_OB-fold"/>
</dbReference>
<dbReference type="InterPro" id="IPR013223">
    <property type="entry name" value="RNase_B_OB_dom"/>
</dbReference>
<dbReference type="InterPro" id="IPR011804">
    <property type="entry name" value="RNase_II"/>
</dbReference>
<dbReference type="InterPro" id="IPR001900">
    <property type="entry name" value="RNase_II/R"/>
</dbReference>
<dbReference type="InterPro" id="IPR022966">
    <property type="entry name" value="RNase_II/R_CS"/>
</dbReference>
<dbReference type="InterPro" id="IPR004476">
    <property type="entry name" value="RNase_II/RNase_R"/>
</dbReference>
<dbReference type="InterPro" id="IPR050180">
    <property type="entry name" value="RNR_Ribonuclease"/>
</dbReference>
<dbReference type="InterPro" id="IPR003029">
    <property type="entry name" value="S1_domain"/>
</dbReference>
<dbReference type="NCBIfam" id="TIGR00358">
    <property type="entry name" value="3_prime_RNase"/>
    <property type="match status" value="1"/>
</dbReference>
<dbReference type="NCBIfam" id="NF003455">
    <property type="entry name" value="PRK05054.1"/>
    <property type="match status" value="1"/>
</dbReference>
<dbReference type="NCBIfam" id="TIGR02062">
    <property type="entry name" value="RNase_B"/>
    <property type="match status" value="1"/>
</dbReference>
<dbReference type="PANTHER" id="PTHR23355:SF37">
    <property type="entry name" value="EXORIBONUCLEASE 2"/>
    <property type="match status" value="1"/>
</dbReference>
<dbReference type="PANTHER" id="PTHR23355">
    <property type="entry name" value="RIBONUCLEASE"/>
    <property type="match status" value="1"/>
</dbReference>
<dbReference type="Pfam" id="PF08206">
    <property type="entry name" value="OB_RNB"/>
    <property type="match status" value="1"/>
</dbReference>
<dbReference type="Pfam" id="PF00773">
    <property type="entry name" value="RNB"/>
    <property type="match status" value="1"/>
</dbReference>
<dbReference type="Pfam" id="PF00575">
    <property type="entry name" value="S1"/>
    <property type="match status" value="1"/>
</dbReference>
<dbReference type="SMART" id="SM00357">
    <property type="entry name" value="CSP"/>
    <property type="match status" value="1"/>
</dbReference>
<dbReference type="SMART" id="SM00955">
    <property type="entry name" value="RNB"/>
    <property type="match status" value="1"/>
</dbReference>
<dbReference type="SUPFAM" id="SSF50249">
    <property type="entry name" value="Nucleic acid-binding proteins"/>
    <property type="match status" value="4"/>
</dbReference>
<dbReference type="PROSITE" id="PS01175">
    <property type="entry name" value="RIBONUCLEASE_II"/>
    <property type="match status" value="1"/>
</dbReference>
<sequence length="678" mass="76155">MFQDNPRLAQLKQKIQETLPKKEGTIKASDKGFGFLEVDSKTSYFVPPPYMKKCMHGDKVVAFIRTENEREVAEPSELIEQSLTRFIGRVKLFKGKLNVAPDHPQLKKLSLKAKTKKGLNEADFQEGDWVVAHLVRHPLKGDDGFFVQISHKITDANDKIAPWWVTLAENDLPNSEPAGIDDWQLKDDADLVREDLTALPFVTIDGESTKDMDDALYAQQLPNGDFALTIAIADPTAYITPEDEMDKVARERGFTIYLPGRNIPMLPRDLADELCSLMENQVRPALCCSVTIRKDGVIGDDIRFFAANIKSHARLVYDHVSDWLETGSSEQWQPSEEIAQVVRDLYAFSQARANWCETHAVVFPDRPDYRFELSADNDVVAIHADMRRTANRLVEESMITANICAGKTLQTTFGFGVFNTHAGFKAEKMADVVELMAVNGAPNADAETLATVEGFAALRRWLATQETSYLDNRIRKYQSYSEIGNQPLPHFAMGLDVYATWTSPIRKYGDMINHRLLKAHILGKAPVQTPDETVGEELALHRKHHKIAERNVADWLYARTLADEPAKETRFQAEIFDINRPGMRVRLLENGAMAFIPGALILDNKERIECNGEDGTILIDKEVVYKLGDVLEIVLTEVNQENRSLVGKPTQVFADLVSETQTSTEQPAEGAENNEPQA</sequence>
<name>RNB_VIBC3</name>
<reference key="1">
    <citation type="submission" date="2007-03" db="EMBL/GenBank/DDBJ databases">
        <authorList>
            <person name="Heidelberg J."/>
        </authorList>
    </citation>
    <scope>NUCLEOTIDE SEQUENCE [LARGE SCALE GENOMIC DNA]</scope>
    <source>
        <strain>ATCC 39541 / Classical Ogawa 395 / O395</strain>
    </source>
</reference>
<reference key="2">
    <citation type="journal article" date="2008" name="PLoS ONE">
        <title>A recalibrated molecular clock and independent origins for the cholera pandemic clones.</title>
        <authorList>
            <person name="Feng L."/>
            <person name="Reeves P.R."/>
            <person name="Lan R."/>
            <person name="Ren Y."/>
            <person name="Gao C."/>
            <person name="Zhou Z."/>
            <person name="Ren Y."/>
            <person name="Cheng J."/>
            <person name="Wang W."/>
            <person name="Wang J."/>
            <person name="Qian W."/>
            <person name="Li D."/>
            <person name="Wang L."/>
        </authorList>
    </citation>
    <scope>NUCLEOTIDE SEQUENCE [LARGE SCALE GENOMIC DNA]</scope>
    <source>
        <strain>ATCC 39541 / Classical Ogawa 395 / O395</strain>
    </source>
</reference>
<accession>A5F0G1</accession>
<accession>C3M699</accession>
<gene>
    <name evidence="2" type="primary">rnb</name>
    <name type="ordered locus">VC0395_0429</name>
    <name type="ordered locus">VC395_A0829</name>
</gene>